<name>DAPE_PSEPF</name>
<feature type="chain" id="PRO_0000375659" description="Succinyl-diaminopimelate desuccinylase">
    <location>
        <begin position="1"/>
        <end position="383"/>
    </location>
</feature>
<feature type="active site" evidence="1">
    <location>
        <position position="75"/>
    </location>
</feature>
<feature type="active site" description="Proton acceptor" evidence="1">
    <location>
        <position position="141"/>
    </location>
</feature>
<feature type="binding site" evidence="1">
    <location>
        <position position="73"/>
    </location>
    <ligand>
        <name>Zn(2+)</name>
        <dbReference type="ChEBI" id="CHEBI:29105"/>
        <label>1</label>
    </ligand>
</feature>
<feature type="binding site" evidence="1">
    <location>
        <position position="107"/>
    </location>
    <ligand>
        <name>Zn(2+)</name>
        <dbReference type="ChEBI" id="CHEBI:29105"/>
        <label>1</label>
    </ligand>
</feature>
<feature type="binding site" evidence="1">
    <location>
        <position position="107"/>
    </location>
    <ligand>
        <name>Zn(2+)</name>
        <dbReference type="ChEBI" id="CHEBI:29105"/>
        <label>2</label>
    </ligand>
</feature>
<feature type="binding site" evidence="1">
    <location>
        <position position="142"/>
    </location>
    <ligand>
        <name>Zn(2+)</name>
        <dbReference type="ChEBI" id="CHEBI:29105"/>
        <label>2</label>
    </ligand>
</feature>
<feature type="binding site" evidence="1">
    <location>
        <position position="170"/>
    </location>
    <ligand>
        <name>Zn(2+)</name>
        <dbReference type="ChEBI" id="CHEBI:29105"/>
        <label>1</label>
    </ligand>
</feature>
<feature type="binding site" evidence="1">
    <location>
        <position position="356"/>
    </location>
    <ligand>
        <name>Zn(2+)</name>
        <dbReference type="ChEBI" id="CHEBI:29105"/>
        <label>2</label>
    </ligand>
</feature>
<reference key="1">
    <citation type="journal article" date="2009" name="Genome Biol.">
        <title>Genomic and genetic analyses of diversity and plant interactions of Pseudomonas fluorescens.</title>
        <authorList>
            <person name="Silby M.W."/>
            <person name="Cerdeno-Tarraga A.M."/>
            <person name="Vernikos G.S."/>
            <person name="Giddens S.R."/>
            <person name="Jackson R.W."/>
            <person name="Preston G.M."/>
            <person name="Zhang X.-X."/>
            <person name="Moon C.D."/>
            <person name="Gehrig S.M."/>
            <person name="Godfrey S.A.C."/>
            <person name="Knight C.G."/>
            <person name="Malone J.G."/>
            <person name="Robinson Z."/>
            <person name="Spiers A.J."/>
            <person name="Harris S."/>
            <person name="Challis G.L."/>
            <person name="Yaxley A.M."/>
            <person name="Harris D."/>
            <person name="Seeger K."/>
            <person name="Murphy L."/>
            <person name="Rutter S."/>
            <person name="Squares R."/>
            <person name="Quail M.A."/>
            <person name="Saunders E."/>
            <person name="Mavromatis K."/>
            <person name="Brettin T.S."/>
            <person name="Bentley S.D."/>
            <person name="Hothersall J."/>
            <person name="Stephens E."/>
            <person name="Thomas C.M."/>
            <person name="Parkhill J."/>
            <person name="Levy S.B."/>
            <person name="Rainey P.B."/>
            <person name="Thomson N.R."/>
        </authorList>
    </citation>
    <scope>NUCLEOTIDE SEQUENCE [LARGE SCALE GENOMIC DNA]</scope>
    <source>
        <strain>Pf0-1</strain>
    </source>
</reference>
<protein>
    <recommendedName>
        <fullName evidence="1">Succinyl-diaminopimelate desuccinylase</fullName>
        <shortName evidence="1">SDAP desuccinylase</shortName>
        <ecNumber evidence="1">3.5.1.18</ecNumber>
    </recommendedName>
    <alternativeName>
        <fullName evidence="1">N-succinyl-LL-2,6-diaminoheptanedioate amidohydrolase</fullName>
    </alternativeName>
</protein>
<accession>Q3KHC5</accession>
<organism>
    <name type="scientific">Pseudomonas fluorescens (strain Pf0-1)</name>
    <dbReference type="NCBI Taxonomy" id="205922"/>
    <lineage>
        <taxon>Bacteria</taxon>
        <taxon>Pseudomonadati</taxon>
        <taxon>Pseudomonadota</taxon>
        <taxon>Gammaproteobacteria</taxon>
        <taxon>Pseudomonadales</taxon>
        <taxon>Pseudomonadaceae</taxon>
        <taxon>Pseudomonas</taxon>
    </lineage>
</organism>
<proteinExistence type="inferred from homology"/>
<dbReference type="EC" id="3.5.1.18" evidence="1"/>
<dbReference type="EMBL" id="CP000094">
    <property type="protein sequence ID" value="ABA72831.1"/>
    <property type="molecule type" value="Genomic_DNA"/>
</dbReference>
<dbReference type="RefSeq" id="WP_011332670.1">
    <property type="nucleotide sequence ID" value="NC_007492.2"/>
</dbReference>
<dbReference type="SMR" id="Q3KHC5"/>
<dbReference type="KEGG" id="pfo:Pfl01_1088"/>
<dbReference type="eggNOG" id="COG0624">
    <property type="taxonomic scope" value="Bacteria"/>
</dbReference>
<dbReference type="HOGENOM" id="CLU_021802_4_0_6"/>
<dbReference type="UniPathway" id="UPA00034">
    <property type="reaction ID" value="UER00021"/>
</dbReference>
<dbReference type="Proteomes" id="UP000002704">
    <property type="component" value="Chromosome"/>
</dbReference>
<dbReference type="GO" id="GO:0008777">
    <property type="term" value="F:acetylornithine deacetylase activity"/>
    <property type="evidence" value="ECO:0007669"/>
    <property type="project" value="TreeGrafter"/>
</dbReference>
<dbReference type="GO" id="GO:0050897">
    <property type="term" value="F:cobalt ion binding"/>
    <property type="evidence" value="ECO:0007669"/>
    <property type="project" value="UniProtKB-UniRule"/>
</dbReference>
<dbReference type="GO" id="GO:0009014">
    <property type="term" value="F:succinyl-diaminopimelate desuccinylase activity"/>
    <property type="evidence" value="ECO:0007669"/>
    <property type="project" value="UniProtKB-UniRule"/>
</dbReference>
<dbReference type="GO" id="GO:0008270">
    <property type="term" value="F:zinc ion binding"/>
    <property type="evidence" value="ECO:0007669"/>
    <property type="project" value="UniProtKB-UniRule"/>
</dbReference>
<dbReference type="GO" id="GO:0019877">
    <property type="term" value="P:diaminopimelate biosynthetic process"/>
    <property type="evidence" value="ECO:0007669"/>
    <property type="project" value="UniProtKB-UniRule"/>
</dbReference>
<dbReference type="GO" id="GO:0006526">
    <property type="term" value="P:L-arginine biosynthetic process"/>
    <property type="evidence" value="ECO:0007669"/>
    <property type="project" value="TreeGrafter"/>
</dbReference>
<dbReference type="GO" id="GO:0009089">
    <property type="term" value="P:lysine biosynthetic process via diaminopimelate"/>
    <property type="evidence" value="ECO:0007669"/>
    <property type="project" value="UniProtKB-UniRule"/>
</dbReference>
<dbReference type="CDD" id="cd03891">
    <property type="entry name" value="M20_DapE_proteobac"/>
    <property type="match status" value="1"/>
</dbReference>
<dbReference type="FunFam" id="3.30.70.360:FF:000011">
    <property type="entry name" value="Succinyl-diaminopimelate desuccinylase"/>
    <property type="match status" value="1"/>
</dbReference>
<dbReference type="FunFam" id="3.40.630.10:FF:000005">
    <property type="entry name" value="Succinyl-diaminopimelate desuccinylase"/>
    <property type="match status" value="1"/>
</dbReference>
<dbReference type="Gene3D" id="3.40.630.10">
    <property type="entry name" value="Zn peptidases"/>
    <property type="match status" value="2"/>
</dbReference>
<dbReference type="HAMAP" id="MF_01690">
    <property type="entry name" value="DapE"/>
    <property type="match status" value="1"/>
</dbReference>
<dbReference type="InterPro" id="IPR001261">
    <property type="entry name" value="ArgE/DapE_CS"/>
</dbReference>
<dbReference type="InterPro" id="IPR036264">
    <property type="entry name" value="Bact_exopeptidase_dim_dom"/>
</dbReference>
<dbReference type="InterPro" id="IPR005941">
    <property type="entry name" value="DapE_proteobac"/>
</dbReference>
<dbReference type="InterPro" id="IPR002933">
    <property type="entry name" value="Peptidase_M20"/>
</dbReference>
<dbReference type="InterPro" id="IPR011650">
    <property type="entry name" value="Peptidase_M20_dimer"/>
</dbReference>
<dbReference type="InterPro" id="IPR050072">
    <property type="entry name" value="Peptidase_M20A"/>
</dbReference>
<dbReference type="NCBIfam" id="TIGR01246">
    <property type="entry name" value="dapE_proteo"/>
    <property type="match status" value="1"/>
</dbReference>
<dbReference type="NCBIfam" id="NF009557">
    <property type="entry name" value="PRK13009.1"/>
    <property type="match status" value="1"/>
</dbReference>
<dbReference type="PANTHER" id="PTHR43808">
    <property type="entry name" value="ACETYLORNITHINE DEACETYLASE"/>
    <property type="match status" value="1"/>
</dbReference>
<dbReference type="PANTHER" id="PTHR43808:SF31">
    <property type="entry name" value="N-ACETYL-L-CITRULLINE DEACETYLASE"/>
    <property type="match status" value="1"/>
</dbReference>
<dbReference type="Pfam" id="PF07687">
    <property type="entry name" value="M20_dimer"/>
    <property type="match status" value="1"/>
</dbReference>
<dbReference type="Pfam" id="PF01546">
    <property type="entry name" value="Peptidase_M20"/>
    <property type="match status" value="1"/>
</dbReference>
<dbReference type="SUPFAM" id="SSF55031">
    <property type="entry name" value="Bacterial exopeptidase dimerisation domain"/>
    <property type="match status" value="1"/>
</dbReference>
<dbReference type="SUPFAM" id="SSF53187">
    <property type="entry name" value="Zn-dependent exopeptidases"/>
    <property type="match status" value="1"/>
</dbReference>
<dbReference type="PROSITE" id="PS00759">
    <property type="entry name" value="ARGE_DAPE_CPG2_2"/>
    <property type="match status" value="1"/>
</dbReference>
<sequence>MTAHADLSPTLQLAIDLIRRPSVTPVDADCQKQMMQRLGDAGFQLEPMRIEDVDNFWATHGKGDGPVLCFAGHTDVVPTGPVTAWQIDPFNAVIDEHGMLCGRGAADMKGSLASMTVAAERFVADYPDHKGKVAFLITSDEEGPAHHGTKAVVERLAARNERLDWCIVGEPSSTTLVGDVVKNGRRGSLGAKLTVRGVQGHVAYPHLAKNPIHLAAPALAELAAEHWDHGNDFFPPTSFQISNVNSGTGATNVIPGDLVAVFNFRFSTESTVEGLQKRVADILDKHGLDWHIDWALSGLPFLTEPGALLDAVSSSIKDITGRETKASTSGGTSDGRFIATMGTQVVELGPVNATIHQVNERVLAADLDVLTEIYYQTLIKLLA</sequence>
<evidence type="ECO:0000255" key="1">
    <source>
        <dbReference type="HAMAP-Rule" id="MF_01690"/>
    </source>
</evidence>
<keyword id="KW-0028">Amino-acid biosynthesis</keyword>
<keyword id="KW-0170">Cobalt</keyword>
<keyword id="KW-0220">Diaminopimelate biosynthesis</keyword>
<keyword id="KW-0378">Hydrolase</keyword>
<keyword id="KW-0457">Lysine biosynthesis</keyword>
<keyword id="KW-0479">Metal-binding</keyword>
<keyword id="KW-0862">Zinc</keyword>
<comment type="function">
    <text evidence="1">Catalyzes the hydrolysis of N-succinyl-L,L-diaminopimelic acid (SDAP), forming succinate and LL-2,6-diaminopimelate (DAP), an intermediate involved in the bacterial biosynthesis of lysine and meso-diaminopimelic acid, an essential component of bacterial cell walls.</text>
</comment>
<comment type="catalytic activity">
    <reaction evidence="1">
        <text>N-succinyl-(2S,6S)-2,6-diaminopimelate + H2O = (2S,6S)-2,6-diaminopimelate + succinate</text>
        <dbReference type="Rhea" id="RHEA:22608"/>
        <dbReference type="ChEBI" id="CHEBI:15377"/>
        <dbReference type="ChEBI" id="CHEBI:30031"/>
        <dbReference type="ChEBI" id="CHEBI:57609"/>
        <dbReference type="ChEBI" id="CHEBI:58087"/>
        <dbReference type="EC" id="3.5.1.18"/>
    </reaction>
</comment>
<comment type="cofactor">
    <cofactor evidence="1">
        <name>Zn(2+)</name>
        <dbReference type="ChEBI" id="CHEBI:29105"/>
    </cofactor>
    <cofactor evidence="1">
        <name>Co(2+)</name>
        <dbReference type="ChEBI" id="CHEBI:48828"/>
    </cofactor>
    <text evidence="1">Binds 2 Zn(2+) or Co(2+) ions per subunit.</text>
</comment>
<comment type="pathway">
    <text evidence="1">Amino-acid biosynthesis; L-lysine biosynthesis via DAP pathway; LL-2,6-diaminopimelate from (S)-tetrahydrodipicolinate (succinylase route): step 3/3.</text>
</comment>
<comment type="subunit">
    <text evidence="1">Homodimer.</text>
</comment>
<comment type="similarity">
    <text evidence="1">Belongs to the peptidase M20A family. DapE subfamily.</text>
</comment>
<gene>
    <name evidence="1" type="primary">dapE</name>
    <name type="ordered locus">Pfl01_1088</name>
</gene>